<reference key="1">
    <citation type="submission" date="2006-10" db="EMBL/GenBank/DDBJ databases">
        <authorList>
            <person name="Fleischmann R.D."/>
            <person name="Dodson R.J."/>
            <person name="Haft D.H."/>
            <person name="Merkel J.S."/>
            <person name="Nelson W.C."/>
            <person name="Fraser C.M."/>
        </authorList>
    </citation>
    <scope>NUCLEOTIDE SEQUENCE [LARGE SCALE GENOMIC DNA]</scope>
    <source>
        <strain>ATCC 700084 / mc(2)155</strain>
    </source>
</reference>
<reference key="2">
    <citation type="journal article" date="2007" name="Genome Biol.">
        <title>Interrupted coding sequences in Mycobacterium smegmatis: authentic mutations or sequencing errors?</title>
        <authorList>
            <person name="Deshayes C."/>
            <person name="Perrodou E."/>
            <person name="Gallien S."/>
            <person name="Euphrasie D."/>
            <person name="Schaeffer C."/>
            <person name="Van-Dorsselaer A."/>
            <person name="Poch O."/>
            <person name="Lecompte O."/>
            <person name="Reyrat J.-M."/>
        </authorList>
    </citation>
    <scope>NUCLEOTIDE SEQUENCE [LARGE SCALE GENOMIC DNA]</scope>
    <source>
        <strain>ATCC 700084 / mc(2)155</strain>
    </source>
</reference>
<reference key="3">
    <citation type="journal article" date="2009" name="Genome Res.">
        <title>Ortho-proteogenomics: multiple proteomes investigation through orthology and a new MS-based protocol.</title>
        <authorList>
            <person name="Gallien S."/>
            <person name="Perrodou E."/>
            <person name="Carapito C."/>
            <person name="Deshayes C."/>
            <person name="Reyrat J.-M."/>
            <person name="Van Dorsselaer A."/>
            <person name="Poch O."/>
            <person name="Schaeffer C."/>
            <person name="Lecompte O."/>
        </authorList>
    </citation>
    <scope>NUCLEOTIDE SEQUENCE [LARGE SCALE GENOMIC DNA]</scope>
    <scope>IDENTIFICATION BY MASS SPECTROMETRY [LARGE SCALE ANALYSIS]</scope>
    <scope>CLEAVAGE OF INITIATOR METHIONINE</scope>
    <source>
        <strain>ATCC 700084 / mc(2)155</strain>
    </source>
</reference>
<name>RRAAH_MYCS2</name>
<comment type="function">
    <text evidence="1">Catalyzes the aldol cleavage of 4-hydroxy-4-methyl-2-oxoglutarate (HMG) into 2 molecules of pyruvate. Also contains a secondary oxaloacetate (OAA) decarboxylase activity due to the common pyruvate enolate transition state formed following C-C bond cleavage in the retro-aldol and decarboxylation reactions (By similarity).</text>
</comment>
<comment type="catalytic activity">
    <reaction>
        <text>4-hydroxy-4-methyl-2-oxoglutarate = 2 pyruvate</text>
        <dbReference type="Rhea" id="RHEA:22748"/>
        <dbReference type="ChEBI" id="CHEBI:15361"/>
        <dbReference type="ChEBI" id="CHEBI:58276"/>
        <dbReference type="EC" id="4.1.3.17"/>
    </reaction>
</comment>
<comment type="catalytic activity">
    <reaction>
        <text>oxaloacetate + H(+) = pyruvate + CO2</text>
        <dbReference type="Rhea" id="RHEA:15641"/>
        <dbReference type="ChEBI" id="CHEBI:15361"/>
        <dbReference type="ChEBI" id="CHEBI:15378"/>
        <dbReference type="ChEBI" id="CHEBI:16452"/>
        <dbReference type="ChEBI" id="CHEBI:16526"/>
        <dbReference type="EC" id="4.1.1.112"/>
    </reaction>
</comment>
<comment type="cofactor">
    <cofactor evidence="1">
        <name>a divalent metal cation</name>
        <dbReference type="ChEBI" id="CHEBI:60240"/>
    </cofactor>
    <text evidence="1">Divalent metal cation.</text>
</comment>
<comment type="subunit">
    <text evidence="1">Homotrimer.</text>
</comment>
<comment type="similarity">
    <text evidence="3">Belongs to the class II aldolase/RraA-like family.</text>
</comment>
<sequence length="159" mass="16407">MSIEPRATADLVDEIYPDVRSCDLQLQNYGGKIMFAGPVTTVRCFQDNALLKSILSTPGEGAVLVVDGAGSLHTALVGDVIAGLAADNGWSGVIVNGAVRDAAALRTIDVGIKALGTNPRKGTKTGEGERDVEVSFGGVTFTPGDIAYCDEDGIVVVTP</sequence>
<gene>
    <name type="primary">rraA</name>
    <name type="ordered locus">MSMEG_6439</name>
    <name type="ordered locus">MSMEI_6271</name>
</gene>
<dbReference type="EC" id="4.1.3.17"/>
<dbReference type="EC" id="4.1.1.112"/>
<dbReference type="EMBL" id="CP000480">
    <property type="protein sequence ID" value="ABK71829.1"/>
    <property type="molecule type" value="Genomic_DNA"/>
</dbReference>
<dbReference type="EMBL" id="CP001663">
    <property type="protein sequence ID" value="AFP42697.1"/>
    <property type="molecule type" value="Genomic_DNA"/>
</dbReference>
<dbReference type="RefSeq" id="WP_011731282.1">
    <property type="nucleotide sequence ID" value="NZ_SIJM01000013.1"/>
</dbReference>
<dbReference type="RefSeq" id="YP_890652.1">
    <property type="nucleotide sequence ID" value="NC_008596.1"/>
</dbReference>
<dbReference type="SMR" id="A0R664"/>
<dbReference type="STRING" id="246196.MSMEG_6439"/>
<dbReference type="PaxDb" id="246196-MSMEI_6271"/>
<dbReference type="KEGG" id="msb:LJ00_31835"/>
<dbReference type="KEGG" id="msg:MSMEI_6271"/>
<dbReference type="KEGG" id="msm:MSMEG_6439"/>
<dbReference type="PATRIC" id="fig|246196.19.peg.6264"/>
<dbReference type="eggNOG" id="COG0684">
    <property type="taxonomic scope" value="Bacteria"/>
</dbReference>
<dbReference type="OrthoDB" id="943692at2"/>
<dbReference type="Proteomes" id="UP000000757">
    <property type="component" value="Chromosome"/>
</dbReference>
<dbReference type="Proteomes" id="UP000006158">
    <property type="component" value="Chromosome"/>
</dbReference>
<dbReference type="GO" id="GO:0047443">
    <property type="term" value="F:4-hydroxy-4-methyl-2-oxoglutarate aldolase activity"/>
    <property type="evidence" value="ECO:0007669"/>
    <property type="project" value="UniProtKB-EC"/>
</dbReference>
<dbReference type="GO" id="GO:0046872">
    <property type="term" value="F:metal ion binding"/>
    <property type="evidence" value="ECO:0007669"/>
    <property type="project" value="UniProtKB-KW"/>
</dbReference>
<dbReference type="GO" id="GO:0008948">
    <property type="term" value="F:oxaloacetate decarboxylase activity"/>
    <property type="evidence" value="ECO:0007669"/>
    <property type="project" value="UniProtKB-EC"/>
</dbReference>
<dbReference type="GO" id="GO:0008428">
    <property type="term" value="F:ribonuclease inhibitor activity"/>
    <property type="evidence" value="ECO:0007669"/>
    <property type="project" value="InterPro"/>
</dbReference>
<dbReference type="GO" id="GO:0051252">
    <property type="term" value="P:regulation of RNA metabolic process"/>
    <property type="evidence" value="ECO:0007669"/>
    <property type="project" value="InterPro"/>
</dbReference>
<dbReference type="CDD" id="cd16841">
    <property type="entry name" value="RraA_family"/>
    <property type="match status" value="1"/>
</dbReference>
<dbReference type="Gene3D" id="3.50.30.40">
    <property type="entry name" value="Ribonuclease E inhibitor RraA/RraA-like"/>
    <property type="match status" value="1"/>
</dbReference>
<dbReference type="InterPro" id="IPR010203">
    <property type="entry name" value="RraA"/>
</dbReference>
<dbReference type="InterPro" id="IPR005493">
    <property type="entry name" value="RraA/RraA-like"/>
</dbReference>
<dbReference type="InterPro" id="IPR036704">
    <property type="entry name" value="RraA/RraA-like_sf"/>
</dbReference>
<dbReference type="NCBIfam" id="TIGR01935">
    <property type="entry name" value="NOT-MenG"/>
    <property type="match status" value="1"/>
</dbReference>
<dbReference type="NCBIfam" id="NF006875">
    <property type="entry name" value="PRK09372.1"/>
    <property type="match status" value="1"/>
</dbReference>
<dbReference type="PANTHER" id="PTHR33254">
    <property type="entry name" value="4-HYDROXY-4-METHYL-2-OXOGLUTARATE ALDOLASE 3-RELATED"/>
    <property type="match status" value="1"/>
</dbReference>
<dbReference type="PANTHER" id="PTHR33254:SF4">
    <property type="entry name" value="4-HYDROXY-4-METHYL-2-OXOGLUTARATE ALDOLASE 3-RELATED"/>
    <property type="match status" value="1"/>
</dbReference>
<dbReference type="Pfam" id="PF03737">
    <property type="entry name" value="RraA-like"/>
    <property type="match status" value="1"/>
</dbReference>
<dbReference type="SUPFAM" id="SSF89562">
    <property type="entry name" value="RraA-like"/>
    <property type="match status" value="1"/>
</dbReference>
<accession>A0R664</accession>
<accession>I7GAU1</accession>
<protein>
    <recommendedName>
        <fullName>Putative 4-hydroxy-4-methyl-2-oxoglutarate aldolase</fullName>
        <shortName>HMG aldolase</shortName>
        <ecNumber>4.1.3.17</ecNumber>
    </recommendedName>
    <alternativeName>
        <fullName>Oxaloacetate decarboxylase</fullName>
        <shortName>OAA decarboxylase</shortName>
        <ecNumber>4.1.1.112</ecNumber>
    </alternativeName>
    <alternativeName>
        <fullName>Regulator of ribonuclease activity homolog</fullName>
    </alternativeName>
    <alternativeName>
        <fullName>RraA-like protein</fullName>
    </alternativeName>
</protein>
<evidence type="ECO:0000250" key="1"/>
<evidence type="ECO:0000269" key="2">
    <source>
    </source>
</evidence>
<evidence type="ECO:0000305" key="3"/>
<keyword id="KW-0456">Lyase</keyword>
<keyword id="KW-0479">Metal-binding</keyword>
<keyword id="KW-1185">Reference proteome</keyword>
<organism>
    <name type="scientific">Mycolicibacterium smegmatis (strain ATCC 700084 / mc(2)155)</name>
    <name type="common">Mycobacterium smegmatis</name>
    <dbReference type="NCBI Taxonomy" id="246196"/>
    <lineage>
        <taxon>Bacteria</taxon>
        <taxon>Bacillati</taxon>
        <taxon>Actinomycetota</taxon>
        <taxon>Actinomycetes</taxon>
        <taxon>Mycobacteriales</taxon>
        <taxon>Mycobacteriaceae</taxon>
        <taxon>Mycolicibacterium</taxon>
    </lineage>
</organism>
<feature type="initiator methionine" description="Removed" evidence="2">
    <location>
        <position position="1"/>
    </location>
</feature>
<feature type="chain" id="PRO_1000013849" description="Putative 4-hydroxy-4-methyl-2-oxoglutarate aldolase">
    <location>
        <begin position="2"/>
        <end position="159"/>
    </location>
</feature>
<feature type="binding site" evidence="1">
    <location>
        <begin position="78"/>
        <end position="81"/>
    </location>
    <ligand>
        <name>substrate</name>
    </ligand>
</feature>
<feature type="binding site" evidence="1">
    <location>
        <position position="100"/>
    </location>
    <ligand>
        <name>substrate</name>
    </ligand>
</feature>
<feature type="binding site" evidence="1">
    <location>
        <position position="101"/>
    </location>
    <ligand>
        <name>a divalent metal cation</name>
        <dbReference type="ChEBI" id="CHEBI:60240"/>
    </ligand>
</feature>
<proteinExistence type="evidence at protein level"/>